<accession>A4ZUD6</accession>
<protein>
    <recommendedName>
        <fullName>Uncharacterized protein ORF150a</fullName>
    </recommendedName>
</protein>
<feature type="chain" id="PRO_0000384857" description="Uncharacterized protein ORF150a">
    <location>
        <begin position="1"/>
        <end position="150"/>
    </location>
</feature>
<gene>
    <name type="ORF">ORF150a</name>
</gene>
<keyword id="KW-1185">Reference proteome</keyword>
<sequence>MAQVEEKIQVKEALDLIEEVFDNLEDLVFNVEEKVRHNPNIPYLYDFIDSLYKVVGTTKSIIEYIMDNIQPQDIYSTLDFYRSWLAYIQRLLYANLKDLNMTENVMGTVTYIIANLYKSFREFKKNNENRQNKVEGIVLNPNTPIPTREL</sequence>
<dbReference type="EMBL" id="EF432053">
    <property type="protein sequence ID" value="ABP73440.1"/>
    <property type="molecule type" value="Genomic_DNA"/>
</dbReference>
<dbReference type="SMR" id="A4ZUD6"/>
<dbReference type="KEGG" id="vg:5129829"/>
<dbReference type="Proteomes" id="UP000000513">
    <property type="component" value="Segment"/>
</dbReference>
<reference key="1">
    <citation type="journal article" date="2007" name="Virology">
        <title>Genome of the Acidianus bottle-shaped virus and insights into the replication and packaging mechanisms.</title>
        <authorList>
            <person name="Peng X."/>
            <person name="Basta T."/>
            <person name="Haring M."/>
            <person name="Garrett R.A."/>
            <person name="Prangishvili D."/>
        </authorList>
    </citation>
    <scope>NUCLEOTIDE SEQUENCE [GENOMIC DNA]</scope>
</reference>
<organism>
    <name type="scientific">Acidianus bottle-shaped virus (isolate Italy/Pozzuoli)</name>
    <name type="common">ABV</name>
    <dbReference type="NCBI Taxonomy" id="654911"/>
    <lineage>
        <taxon>Viruses</taxon>
        <taxon>Viruses incertae sedis</taxon>
        <taxon>Ampullaviridae</taxon>
        <taxon>Bottigliavirus</taxon>
        <taxon>Bottigliavirus ABV</taxon>
    </lineage>
</organism>
<proteinExistence type="predicted"/>
<organismHost>
    <name type="scientific">Acidianus convivator</name>
    <dbReference type="NCBI Taxonomy" id="269667"/>
</organismHost>
<name>Y150A_ABVP</name>